<protein>
    <recommendedName>
        <fullName evidence="6">Golgi-specific brefeldin A-resistance guanine nucleotide exchange factor 1</fullName>
        <shortName evidence="6">BFA-resistant GEF 1</shortName>
    </recommendedName>
</protein>
<dbReference type="EMBL" id="BC076569">
    <property type="protein sequence ID" value="AAH76569.1"/>
    <property type="molecule type" value="mRNA"/>
</dbReference>
<dbReference type="CCDS" id="CCDS29873.1"/>
<dbReference type="RefSeq" id="NP_849261.2">
    <property type="nucleotide sequence ID" value="NM_178930.3"/>
</dbReference>
<dbReference type="SMR" id="Q6DFZ1"/>
<dbReference type="FunCoup" id="Q6DFZ1">
    <property type="interactions" value="4173"/>
</dbReference>
<dbReference type="IntAct" id="Q6DFZ1">
    <property type="interactions" value="11"/>
</dbReference>
<dbReference type="STRING" id="10090.ENSMUSP00000026254"/>
<dbReference type="GlyGen" id="Q6DFZ1">
    <property type="glycosylation" value="6 sites, 1 N-linked glycan (1 site), 1 O-linked glycan (1 site)"/>
</dbReference>
<dbReference type="iPTMnet" id="Q6DFZ1"/>
<dbReference type="PhosphoSitePlus" id="Q6DFZ1"/>
<dbReference type="SwissPalm" id="Q6DFZ1"/>
<dbReference type="jPOST" id="Q6DFZ1"/>
<dbReference type="PaxDb" id="10090-ENSMUSP00000026254"/>
<dbReference type="PeptideAtlas" id="Q6DFZ1"/>
<dbReference type="ProteomicsDB" id="340742"/>
<dbReference type="Antibodypedia" id="31405">
    <property type="antibodies" value="97 antibodies from 20 providers"/>
</dbReference>
<dbReference type="DNASU" id="107338"/>
<dbReference type="Ensembl" id="ENSMUST00000026254.14">
    <property type="protein sequence ID" value="ENSMUSP00000026254.8"/>
    <property type="gene ID" value="ENSMUSG00000025224.17"/>
</dbReference>
<dbReference type="GeneID" id="107338"/>
<dbReference type="KEGG" id="mmu:107338"/>
<dbReference type="UCSC" id="uc008hsp.1">
    <property type="organism name" value="mouse"/>
</dbReference>
<dbReference type="AGR" id="MGI:1861607"/>
<dbReference type="CTD" id="8729"/>
<dbReference type="MGI" id="MGI:1861607">
    <property type="gene designation" value="Gbf1"/>
</dbReference>
<dbReference type="VEuPathDB" id="HostDB:ENSMUSG00000025224"/>
<dbReference type="eggNOG" id="KOG0928">
    <property type="taxonomic scope" value="Eukaryota"/>
</dbReference>
<dbReference type="GeneTree" id="ENSGT00940000156925"/>
<dbReference type="OMA" id="CRDIRHH"/>
<dbReference type="OrthoDB" id="10258608at2759"/>
<dbReference type="TreeFam" id="TF105934"/>
<dbReference type="Reactome" id="R-MMU-199992">
    <property type="pathway name" value="trans-Golgi Network Vesicle Budding"/>
</dbReference>
<dbReference type="Reactome" id="R-MMU-5620916">
    <property type="pathway name" value="VxPx cargo-targeting to cilium"/>
</dbReference>
<dbReference type="Reactome" id="R-MMU-6807878">
    <property type="pathway name" value="COPI-mediated anterograde transport"/>
</dbReference>
<dbReference type="Reactome" id="R-MMU-6811434">
    <property type="pathway name" value="COPI-dependent Golgi-to-ER retrograde traffic"/>
</dbReference>
<dbReference type="BioGRID-ORCS" id="107338">
    <property type="hits" value="22 hits in 79 CRISPR screens"/>
</dbReference>
<dbReference type="ChiTaRS" id="Gbf1">
    <property type="organism name" value="mouse"/>
</dbReference>
<dbReference type="PRO" id="PR:Q6DFZ1"/>
<dbReference type="Proteomes" id="UP000000589">
    <property type="component" value="Chromosome 19"/>
</dbReference>
<dbReference type="RNAct" id="Q6DFZ1">
    <property type="molecule type" value="protein"/>
</dbReference>
<dbReference type="Bgee" id="ENSMUSG00000025224">
    <property type="expression patterns" value="Expressed in retinal neural layer and 269 other cell types or tissues"/>
</dbReference>
<dbReference type="ExpressionAtlas" id="Q6DFZ1">
    <property type="expression patterns" value="baseline and differential"/>
</dbReference>
<dbReference type="GO" id="GO:0031252">
    <property type="term" value="C:cell leading edge"/>
    <property type="evidence" value="ECO:0007669"/>
    <property type="project" value="Ensembl"/>
</dbReference>
<dbReference type="GO" id="GO:0005801">
    <property type="term" value="C:cis-Golgi network"/>
    <property type="evidence" value="ECO:0007669"/>
    <property type="project" value="Ensembl"/>
</dbReference>
<dbReference type="GO" id="GO:0005829">
    <property type="term" value="C:cytosol"/>
    <property type="evidence" value="ECO:0007669"/>
    <property type="project" value="Ensembl"/>
</dbReference>
<dbReference type="GO" id="GO:0005788">
    <property type="term" value="C:endoplasmic reticulum lumen"/>
    <property type="evidence" value="ECO:0007669"/>
    <property type="project" value="Ensembl"/>
</dbReference>
<dbReference type="GO" id="GO:0005793">
    <property type="term" value="C:endoplasmic reticulum-Golgi intermediate compartment"/>
    <property type="evidence" value="ECO:0007669"/>
    <property type="project" value="UniProtKB-SubCell"/>
</dbReference>
<dbReference type="GO" id="GO:0000139">
    <property type="term" value="C:Golgi membrane"/>
    <property type="evidence" value="ECO:0007669"/>
    <property type="project" value="GOC"/>
</dbReference>
<dbReference type="GO" id="GO:0005795">
    <property type="term" value="C:Golgi stack"/>
    <property type="evidence" value="ECO:0007669"/>
    <property type="project" value="Ensembl"/>
</dbReference>
<dbReference type="GO" id="GO:0005811">
    <property type="term" value="C:lipid droplet"/>
    <property type="evidence" value="ECO:0007669"/>
    <property type="project" value="UniProtKB-SubCell"/>
</dbReference>
<dbReference type="GO" id="GO:0005777">
    <property type="term" value="C:peroxisome"/>
    <property type="evidence" value="ECO:0007669"/>
    <property type="project" value="Ensembl"/>
</dbReference>
<dbReference type="GO" id="GO:0005802">
    <property type="term" value="C:trans-Golgi network"/>
    <property type="evidence" value="ECO:0007669"/>
    <property type="project" value="Ensembl"/>
</dbReference>
<dbReference type="GO" id="GO:0005085">
    <property type="term" value="F:guanyl-nucleotide exchange factor activity"/>
    <property type="evidence" value="ECO:0007669"/>
    <property type="project" value="UniProtKB-KW"/>
</dbReference>
<dbReference type="GO" id="GO:0005547">
    <property type="term" value="F:phosphatidylinositol-3,4,5-trisphosphate binding"/>
    <property type="evidence" value="ECO:0007669"/>
    <property type="project" value="Ensembl"/>
</dbReference>
<dbReference type="GO" id="GO:0080025">
    <property type="term" value="F:phosphatidylinositol-3,5-bisphosphate binding"/>
    <property type="evidence" value="ECO:0007669"/>
    <property type="project" value="Ensembl"/>
</dbReference>
<dbReference type="GO" id="GO:0002263">
    <property type="term" value="P:cell activation involved in immune response"/>
    <property type="evidence" value="ECO:0007669"/>
    <property type="project" value="Ensembl"/>
</dbReference>
<dbReference type="GO" id="GO:0098586">
    <property type="term" value="P:cellular response to virus"/>
    <property type="evidence" value="ECO:0007669"/>
    <property type="project" value="Ensembl"/>
</dbReference>
<dbReference type="GO" id="GO:0048205">
    <property type="term" value="P:COPI coating of Golgi vesicle"/>
    <property type="evidence" value="ECO:0007669"/>
    <property type="project" value="Ensembl"/>
</dbReference>
<dbReference type="GO" id="GO:0097111">
    <property type="term" value="P:endoplasmic reticulum-Golgi intermediate compartment organization"/>
    <property type="evidence" value="ECO:0007669"/>
    <property type="project" value="Ensembl"/>
</dbReference>
<dbReference type="GO" id="GO:0061162">
    <property type="term" value="P:establishment of monopolar cell polarity"/>
    <property type="evidence" value="ECO:0007669"/>
    <property type="project" value="Ensembl"/>
</dbReference>
<dbReference type="GO" id="GO:0090166">
    <property type="term" value="P:Golgi disassembly"/>
    <property type="evidence" value="ECO:0007669"/>
    <property type="project" value="Ensembl"/>
</dbReference>
<dbReference type="GO" id="GO:0006895">
    <property type="term" value="P:Golgi to endosome transport"/>
    <property type="evidence" value="ECO:0007669"/>
    <property type="project" value="Ensembl"/>
</dbReference>
<dbReference type="GO" id="GO:0030593">
    <property type="term" value="P:neutrophil chemotaxis"/>
    <property type="evidence" value="ECO:0007669"/>
    <property type="project" value="Ensembl"/>
</dbReference>
<dbReference type="GO" id="GO:0070973">
    <property type="term" value="P:protein localization to endoplasmic reticulum exit site"/>
    <property type="evidence" value="ECO:0007669"/>
    <property type="project" value="Ensembl"/>
</dbReference>
<dbReference type="GO" id="GO:1903420">
    <property type="term" value="P:protein localization to endoplasmic reticulum tubular network"/>
    <property type="evidence" value="ECO:0007669"/>
    <property type="project" value="Ensembl"/>
</dbReference>
<dbReference type="GO" id="GO:0034067">
    <property type="term" value="P:protein localization to Golgi apparatus"/>
    <property type="evidence" value="ECO:0007669"/>
    <property type="project" value="Ensembl"/>
</dbReference>
<dbReference type="GO" id="GO:0015031">
    <property type="term" value="P:protein transport"/>
    <property type="evidence" value="ECO:0007669"/>
    <property type="project" value="UniProtKB-KW"/>
</dbReference>
<dbReference type="GO" id="GO:1903409">
    <property type="term" value="P:reactive oxygen species biosynthetic process"/>
    <property type="evidence" value="ECO:0007669"/>
    <property type="project" value="Ensembl"/>
</dbReference>
<dbReference type="GO" id="GO:0032012">
    <property type="term" value="P:regulation of ARF protein signal transduction"/>
    <property type="evidence" value="ECO:0007669"/>
    <property type="project" value="InterPro"/>
</dbReference>
<dbReference type="GO" id="GO:0007346">
    <property type="term" value="P:regulation of mitotic cell cycle"/>
    <property type="evidence" value="ECO:0007669"/>
    <property type="project" value="Ensembl"/>
</dbReference>
<dbReference type="GO" id="GO:2000008">
    <property type="term" value="P:regulation of protein localization to cell surface"/>
    <property type="evidence" value="ECO:0007669"/>
    <property type="project" value="Ensembl"/>
</dbReference>
<dbReference type="GO" id="GO:0042147">
    <property type="term" value="P:retrograde transport, endosome to Golgi"/>
    <property type="evidence" value="ECO:0007669"/>
    <property type="project" value="Ensembl"/>
</dbReference>
<dbReference type="GO" id="GO:0006890">
    <property type="term" value="P:retrograde vesicle-mediated transport, Golgi to endoplasmic reticulum"/>
    <property type="evidence" value="ECO:0007669"/>
    <property type="project" value="Ensembl"/>
</dbReference>
<dbReference type="CDD" id="cd00171">
    <property type="entry name" value="Sec7"/>
    <property type="match status" value="1"/>
</dbReference>
<dbReference type="FunFam" id="1.10.1000.11:FF:000007">
    <property type="entry name" value="Golgi-specific brefeldin A-resistance guanine nucleotide exchange factor 1"/>
    <property type="match status" value="1"/>
</dbReference>
<dbReference type="FunFam" id="1.10.220.20:FF:000004">
    <property type="entry name" value="Golgi-specific brefeldin A-resistance guanine nucleotide exchange factor 1"/>
    <property type="match status" value="1"/>
</dbReference>
<dbReference type="Gene3D" id="1.10.220.20">
    <property type="match status" value="1"/>
</dbReference>
<dbReference type="Gene3D" id="1.10.1000.11">
    <property type="entry name" value="Arf Nucleotide-binding Site Opener,domain 2"/>
    <property type="match status" value="1"/>
</dbReference>
<dbReference type="InterPro" id="IPR016024">
    <property type="entry name" value="ARM-type_fold"/>
</dbReference>
<dbReference type="InterPro" id="IPR056604">
    <property type="entry name" value="GBF1-like_TPR"/>
</dbReference>
<dbReference type="InterPro" id="IPR032691">
    <property type="entry name" value="Mon2/Sec7/BIG1-like_HUS"/>
</dbReference>
<dbReference type="InterPro" id="IPR023394">
    <property type="entry name" value="Sec7_C_sf"/>
</dbReference>
<dbReference type="InterPro" id="IPR000904">
    <property type="entry name" value="Sec7_dom"/>
</dbReference>
<dbReference type="InterPro" id="IPR035999">
    <property type="entry name" value="Sec7_dom_sf"/>
</dbReference>
<dbReference type="PANTHER" id="PTHR10663:SF388">
    <property type="entry name" value="GOLGI-SPECIFIC BREFELDIN A-RESISTANCE GUANINE NUCLEOTIDE EXCHANGE FACTOR 1"/>
    <property type="match status" value="1"/>
</dbReference>
<dbReference type="PANTHER" id="PTHR10663">
    <property type="entry name" value="GUANYL-NUCLEOTIDE EXCHANGE FACTOR"/>
    <property type="match status" value="1"/>
</dbReference>
<dbReference type="Pfam" id="PF01369">
    <property type="entry name" value="Sec7"/>
    <property type="match status" value="1"/>
</dbReference>
<dbReference type="Pfam" id="PF12783">
    <property type="entry name" value="Sec7-like_HUS"/>
    <property type="match status" value="1"/>
</dbReference>
<dbReference type="Pfam" id="PF23325">
    <property type="entry name" value="TPR_28"/>
    <property type="match status" value="1"/>
</dbReference>
<dbReference type="SMART" id="SM00222">
    <property type="entry name" value="Sec7"/>
    <property type="match status" value="1"/>
</dbReference>
<dbReference type="SUPFAM" id="SSF48371">
    <property type="entry name" value="ARM repeat"/>
    <property type="match status" value="1"/>
</dbReference>
<dbReference type="SUPFAM" id="SSF48425">
    <property type="entry name" value="Sec7 domain"/>
    <property type="match status" value="1"/>
</dbReference>
<dbReference type="PROSITE" id="PS50190">
    <property type="entry name" value="SEC7"/>
    <property type="match status" value="1"/>
</dbReference>
<proteinExistence type="evidence at protein level"/>
<accession>Q6DFZ1</accession>
<gene>
    <name evidence="8" type="primary">Gbf1</name>
</gene>
<evidence type="ECO:0000250" key="1">
    <source>
        <dbReference type="UniProtKB" id="Q92538"/>
    </source>
</evidence>
<evidence type="ECO:0000250" key="2">
    <source>
        <dbReference type="UniProtKB" id="Q9R1D7"/>
    </source>
</evidence>
<evidence type="ECO:0000255" key="3">
    <source>
        <dbReference type="PROSITE-ProRule" id="PRU00189"/>
    </source>
</evidence>
<evidence type="ECO:0000256" key="4">
    <source>
        <dbReference type="SAM" id="MobiDB-lite"/>
    </source>
</evidence>
<evidence type="ECO:0000269" key="5">
    <source>
    </source>
</evidence>
<evidence type="ECO:0000305" key="6"/>
<evidence type="ECO:0000312" key="7">
    <source>
        <dbReference type="EMBL" id="AAH76569.1"/>
    </source>
</evidence>
<evidence type="ECO:0000312" key="8">
    <source>
        <dbReference type="MGI" id="MGI:1861607"/>
    </source>
</evidence>
<evidence type="ECO:0000312" key="9">
    <source>
        <dbReference type="Proteomes" id="UP000000589"/>
    </source>
</evidence>
<sequence>MVDKNIYIIQGEINIVVGAIKRNARWSTHIPLDEERDPLLHSFSNLKEVLNSVTELSEIEPNVFLRPFLEVIRSEDTTGPITGLALTSVNKFLSYALIDPTHEGTAEGMENMADAVTHARFVGTDPASDEVVLMKILQVLRTLLLTPVGTHLTNESVCEIMQSCFRICFEMRLSELLRKSAEHTLVDMVQLLFTRLPQFKEEPKSYVGTNMKKLKMRAGGMSDSSKWKKQKRSPRPPRHTTKVTPGSELPTPNGATLPSNLTGGVPFIDAPTSISSASSEAASTVVSPCTDSGLELSSQTTSKEDLTDLEQAGSPREITTSEPGSSEMGASDQLDPQEGAHVEKAQSASVESIPEVLEECTSPADHSDSASVHDMDYVNPRGVRFTQSSQKEGTALVPYGLPCIRELFRFLISLTNPHDRHNSEVMIHMGLHLLTVALESAPVAQCQTLLGLIKDEMCRHLFQLLSVERLNLYAASLRVCFLLFESMREHLKFQLEMYIKKLMEIITVENPKMPYEMKEMALEAVVQLWRIPSFVTELYINYDCDYYCSNLFEDLTKLLSKNAFPVSGQLYTTHLLSLDALLTVIDSTESHCQAKVLNTLNQQEKKETARPGFEAVDGNPETNKSERATSDGKSTGVALDARGLHFPSGGWLSTEHGKPGCRDLEEAGDSGADKKFTRKPPRFSCLLPDPRELIEIKNKKKLLITGTEQFNQKPKKGIQFLQEKGLLTIPMDNTEVAQWLRENPRLDKKMIGEFVSDRKNMDLLESFVSTFSFQGLRLDEALRLYLEAFRLPGEAPVIHRLLEVFTEHWRSCNGSPFANSDACFALAYAVIMLNTDQHNHNVRKQNAPMTLEEFRKNLKGVNGGKDFEQDILEDMYHAIKNEEIVMPEEQTGLVRENYVWSVLLHRGASPEGVFLRVPPGSYDLDLFTMTWGPTIAALSYVFDKSLEETIIQKAISGFRKCAMISAHYGLSDVFDNLIISLCKFTALSSESIENLPSVFGSNPKAHIAAKTVFHLAHRHGDILREGWKNIMEAMLQLFRAQLLPKAMVEVEDFVDPNGKISLQREETPSNRGESTVLSFVSWLTLSGPEQSSVRGPSTENQEAKRVALDCIKQCDPEKMITESKFLQLESLQELMKALVSVTPDEETYDEEDAAFCLEMLLRIVLENRDRVGCVWQTVRDHLYHLCVQAQDFCFLVERAVVGLLRLAIRLLRREEISGQVLLSLRILLLMKPSVLSRVSHQVAYGLHELLKTNAANIHSGDDWATLFTLLECIGSGVKPPDALQATARADAPDAGAQSDSELPSYHQNDVSLDRGYTSDSEVYTDHGRPGKIHRSATDADMVNSGWLVVGKDDIDNSKPGAGLSRPGPSPLVNQYSLTVGLDLGPHDTKSLLKCVESLSFIVRDAAHITPDNFELCVKTLRIFVEASLNGGCKSQDKRSKSHKYDSKGNRFKKKPKEGSMLRRPRGSNQHATRGGHSDEEEDEGVPASYHTVSLQVSQDLLDLMHTLHTRAASIYSSWAEEQRHLEGGGQKIEADSRTLWAHCWCPLLQGIACLCCDARRQVRMQALTYLQRALLVHDLQKLDALEWESCFNKVLFPLLTKLLENISPADVGGMEETRMRASTLLSKVFLQHLSPLLSLSTFAALWLTILDFMDKYMHAGSSDLLSEAIPESLKNMLLVMDTAEIFHSADARGGGPSALWEITWERIDCFLPHLRDELFKQTVIQDPMPAEPHSQKPLASTHLTSAAGDPRMPGHPPLPEIPSEMGVCDSEKPESTRAPSSSSPGSPMASSPSKLSPAQEGPPPLTQPPLILQPLTSPLQVGVPPMTLPIILNPALIEATSPVPLLATPRPTDPIPTSEVN</sequence>
<name>GBF1_MOUSE</name>
<comment type="function">
    <text evidence="1 2">Guanine-nucleotide exchange factor (GEF) for members of the Arf family of small GTPases involved in trafficking in the early secretory pathway; its GEF activity initiates the coating of nascent vesicles via the localized generation of activated ARFs through replacement of GDP with GTP. Recruitment to cis-Golgi membranes requires membrane association of Arf-GDP and can be regulated by ARF1, ARF3, ARF4 and ARF5. Involved in the recruitment of the COPI coat complex to the endoplasmic reticulum exit sites (ERES), and the endoplasmic reticulum-Golgi intermediate (ERGIC) and cis-Golgi compartments which implicates ARF1 activation. Involved in COPI vesicle-dependent retrograde transport from the ERGIC and cis-Golgi compartments to the endoplasmic reticulum (ER) (By similarity). Involved in the trans-Golgi network recruitment of GGA1, GGA2, GGA3, BIG1, BIG2, and the AP-1 adaptor protein complex related to chlathrin-dependent transport; the function requires its GEF activity (probably at least in part on ARF4 and ARF5) (By similarity). Has GEF activity towards ARF1 (By similarity). Has in vitro GEF activity towards ARF5 (By similarity). Involved in the processing of PSAP (By similarity). Required for the assembly of the Golgi apparatus (By similarity). The AMPK-phosphorylated form is involved in Golgi disassembly during mitotis and under stress conditions (By similarity). May be involved in the COPI vesicle-dependent recruitment of PNPLA2 to lipid droplets; however, this function is under debate (By similarity). In neutrophils, involved in G protein-coupled receptor (GPCR)-mediated chemotaxis und superoxide production. Proposed to be recruited by phosphatidylinositol-phosphates generated upon GPCR stimulation to the leading edge where it recruits and activates ARF1, and is involved in recruitment of GIT2 and the NADPH oxidase complex (By similarity). Plays a role in maintaining mitochondrial morphology (By similarity).</text>
</comment>
<comment type="subunit">
    <text evidence="1">Can form homodimers and probably homotetramers (By similarity). Interacts with COPG1; the interaction is independent on ARF1 activation (By similarity). Interacts with ARF1, ARF3, ARF4 and ARF5 (By similarity). Interacts with RAB1B (GTP-bound form); required for GBF1 membrane association (By similarity). Interacts with GGA1, GGA2 and GGA3 (By similarity). Interacts with USO1 (By similarity). Interacts (via SEC7 domain) with PNPLA2 (via C-terminus); the interaction is direct (By similarity). Interacts with ARMH3 (By similarity).</text>
</comment>
<comment type="interaction">
    <interactant intactId="EBI-761491">
        <id>Q6DFZ1</id>
    </interactant>
    <interactant intactId="EBI-4423297">
        <id>P41542</id>
        <label>Uso1</label>
    </interactant>
    <organismsDiffer>true</organismsDiffer>
    <experiments>3</experiments>
</comment>
<comment type="subcellular location">
    <subcellularLocation>
        <location evidence="1">Golgi apparatus</location>
        <location evidence="1">cis-Golgi network</location>
    </subcellularLocation>
    <subcellularLocation>
        <location evidence="1">Endoplasmic reticulum-Golgi intermediate compartment</location>
    </subcellularLocation>
    <subcellularLocation>
        <location evidence="1">Golgi apparatus</location>
        <location evidence="1">trans-Golgi network</location>
    </subcellularLocation>
    <subcellularLocation>
        <location evidence="1">Golgi apparatus</location>
    </subcellularLocation>
    <subcellularLocation>
        <location evidence="1">Cytoplasm</location>
    </subcellularLocation>
    <subcellularLocation>
        <location evidence="1">Lipid droplet</location>
    </subcellularLocation>
    <subcellularLocation>
        <location>Membrane</location>
        <topology evidence="6">Peripheral membrane protein</topology>
    </subcellularLocation>
    <text evidence="1">Cycles rapidly on and off early Golgi membranes. Stabilized on membranes when complexed with ARF1-GDP and is released from both ARF1 and membranes after it catalyzes GDP displacement and ARF1 binds GTP. Continuous cycles of recruitment and dissociation of GBF1 to membranes are required for sustained ARF activation and COP I recruitment (By similarity).</text>
</comment>
<comment type="developmental stage">
    <text evidence="5">Expressed in brain, spinal cord, and gastrocnemius muscle at postnatal days P10, P21, and P28 (at protein level) (PubMed:32937143). Expression decreases in neuronal tissues from postnatal day P10 to P28 (at protein level) (PubMed:32937143).</text>
</comment>
<comment type="domain">
    <text evidence="2">The DCB (dimerization and cyclophilin-binding) and HUS (homology upstream of Sec7) domains are necessary for dimerization. The DCB domain is proposed to support constitutive homodimerization; the HUS domain interacts with the DCB domain which may occur intramolecular or intermolecular (By similarity).</text>
</comment>
<keyword id="KW-0963">Cytoplasm</keyword>
<keyword id="KW-0333">Golgi apparatus</keyword>
<keyword id="KW-0344">Guanine-nucleotide releasing factor</keyword>
<keyword id="KW-0551">Lipid droplet</keyword>
<keyword id="KW-0472">Membrane</keyword>
<keyword id="KW-0597">Phosphoprotein</keyword>
<keyword id="KW-0653">Protein transport</keyword>
<keyword id="KW-1185">Reference proteome</keyword>
<keyword id="KW-0813">Transport</keyword>
<reference evidence="7" key="1">
    <citation type="journal article" date="2004" name="Genome Res.">
        <title>The status, quality, and expansion of the NIH full-length cDNA project: the Mammalian Gene Collection (MGC).</title>
        <authorList>
            <consortium name="The MGC Project Team"/>
        </authorList>
    </citation>
    <scope>NUCLEOTIDE SEQUENCE [LARGE SCALE MRNA]</scope>
    <source>
        <strain evidence="7">C57BL/6J</strain>
        <tissue evidence="7">Brain</tissue>
    </source>
</reference>
<reference evidence="9" key="2">
    <citation type="journal article" date="2009" name="PLoS Biol.">
        <title>Lineage-specific biology revealed by a finished genome assembly of the mouse.</title>
        <authorList>
            <person name="Church D.M."/>
            <person name="Goodstadt L."/>
            <person name="Hillier L.W."/>
            <person name="Zody M.C."/>
            <person name="Goldstein S."/>
            <person name="She X."/>
            <person name="Bult C.J."/>
            <person name="Agarwala R."/>
            <person name="Cherry J.L."/>
            <person name="DiCuccio M."/>
            <person name="Hlavina W."/>
            <person name="Kapustin Y."/>
            <person name="Meric P."/>
            <person name="Maglott D."/>
            <person name="Birtle Z."/>
            <person name="Marques A.C."/>
            <person name="Graves T."/>
            <person name="Zhou S."/>
            <person name="Teague B."/>
            <person name="Potamousis K."/>
            <person name="Churas C."/>
            <person name="Place M."/>
            <person name="Herschleb J."/>
            <person name="Runnheim R."/>
            <person name="Forrest D."/>
            <person name="Amos-Landgraf J."/>
            <person name="Schwartz D.C."/>
            <person name="Cheng Z."/>
            <person name="Lindblad-Toh K."/>
            <person name="Eichler E.E."/>
            <person name="Ponting C.P."/>
        </authorList>
    </citation>
    <scope>NUCLEOTIDE SEQUENCE [LARGE SCALE GENOMIC DNA]</scope>
    <source>
        <strain evidence="9">C57BL/6J</strain>
    </source>
</reference>
<reference evidence="6" key="3">
    <citation type="journal article" date="2020" name="Am. J. Hum. Genet.">
        <title>De Novo and Inherited Variants in GBF1 are Associated with Axonal Neuropathy Caused by Golgi Fragmentation.</title>
        <authorList>
            <person name="Mendoza-Ferreira N."/>
            <person name="Karakaya M."/>
            <person name="Cengiz N."/>
            <person name="Beijer D."/>
            <person name="Brigatti K.W."/>
            <person name="Gonzaga-Jauregui C."/>
            <person name="Fuhrmann N."/>
            <person name="Hoelker I."/>
            <person name="Thelen M.P."/>
            <person name="Zetzsche S."/>
            <person name="Rombo R."/>
            <person name="Puffenberger E.G."/>
            <person name="De Jonghe P."/>
            <person name="Deconinck T."/>
            <person name="Zuchner S."/>
            <person name="Strauss K.A."/>
            <person name="Carson V."/>
            <person name="Schrank B."/>
            <person name="Wunderlich G."/>
            <person name="Baets J."/>
            <person name="Wirth B."/>
        </authorList>
    </citation>
    <scope>DEVELOPMENTAL STAGE</scope>
</reference>
<feature type="chain" id="PRO_0000459472" description="Golgi-specific brefeldin A-resistance guanine nucleotide exchange factor 1">
    <location>
        <begin position="1"/>
        <end position="1861"/>
    </location>
</feature>
<feature type="domain" description="SEC7" evidence="3">
    <location>
        <begin position="692"/>
        <end position="882"/>
    </location>
</feature>
<feature type="region of interest" description="Interaction with RAB1B" evidence="1">
    <location>
        <begin position="1"/>
        <end position="380"/>
    </location>
</feature>
<feature type="region of interest" description="DCB; DCB:DCB domain and DCB:HUS domain interaction" evidence="2">
    <location>
        <begin position="1"/>
        <end position="211"/>
    </location>
</feature>
<feature type="region of interest" description="Disordered" evidence="4">
    <location>
        <begin position="210"/>
        <end position="264"/>
    </location>
</feature>
<feature type="region of interest" description="Disordered" evidence="4">
    <location>
        <begin position="289"/>
        <end position="353"/>
    </location>
</feature>
<feature type="region of interest" description="HUS; DCB:HUS domain interaction" evidence="2">
    <location>
        <begin position="530"/>
        <end position="550"/>
    </location>
</feature>
<feature type="region of interest" description="Disordered" evidence="4">
    <location>
        <begin position="603"/>
        <end position="634"/>
    </location>
</feature>
<feature type="region of interest" description="Phosphatidylinositol-phosphate binding; required for translocation to the leading edge and for ARF1 activation upon GPCR signaling" evidence="1">
    <location>
        <begin position="886"/>
        <end position="1372"/>
    </location>
</feature>
<feature type="region of interest" description="Disordered" evidence="4">
    <location>
        <begin position="1286"/>
        <end position="1335"/>
    </location>
</feature>
<feature type="region of interest" description="Disordered" evidence="4">
    <location>
        <begin position="1431"/>
        <end position="1486"/>
    </location>
</feature>
<feature type="region of interest" description="Disordered" evidence="4">
    <location>
        <begin position="1727"/>
        <end position="1812"/>
    </location>
</feature>
<feature type="compositionally biased region" description="Basic residues" evidence="4">
    <location>
        <begin position="227"/>
        <end position="241"/>
    </location>
</feature>
<feature type="compositionally biased region" description="Polar residues" evidence="4">
    <location>
        <begin position="253"/>
        <end position="262"/>
    </location>
</feature>
<feature type="compositionally biased region" description="Low complexity" evidence="4">
    <location>
        <begin position="1286"/>
        <end position="1296"/>
    </location>
</feature>
<feature type="compositionally biased region" description="Polar residues" evidence="4">
    <location>
        <begin position="1297"/>
        <end position="1310"/>
    </location>
</feature>
<feature type="compositionally biased region" description="Basic and acidic residues" evidence="4">
    <location>
        <begin position="1434"/>
        <end position="1448"/>
    </location>
</feature>
<feature type="compositionally biased region" description="Low complexity" evidence="4">
    <location>
        <begin position="1776"/>
        <end position="1793"/>
    </location>
</feature>
<feature type="modified residue" description="Phosphoserine" evidence="1">
    <location>
        <position position="349"/>
    </location>
</feature>
<feature type="modified residue" description="Phosphoserine" evidence="1">
    <location>
        <position position="352"/>
    </location>
</feature>
<feature type="modified residue" description="Phosphothreonine" evidence="1">
    <location>
        <position position="507"/>
    </location>
</feature>
<feature type="modified residue" description="Phosphoserine" evidence="1">
    <location>
        <position position="1298"/>
    </location>
</feature>
<feature type="modified residue" description="Phosphotyrosine" evidence="1">
    <location>
        <position position="1316"/>
    </location>
</feature>
<feature type="modified residue" description="Phosphoserine" evidence="1">
    <location>
        <position position="1318"/>
    </location>
</feature>
<feature type="modified residue" description="Phosphoserine" evidence="1">
    <location>
        <position position="1320"/>
    </location>
</feature>
<feature type="modified residue" description="Phosphoserine" evidence="1">
    <location>
        <position position="1335"/>
    </location>
</feature>
<feature type="modified residue" description="Phosphothreonine" evidence="1">
    <location>
        <position position="1337"/>
    </location>
</feature>
<feature type="modified residue" description="Phosphoserine" evidence="1">
    <location>
        <position position="1477"/>
    </location>
</feature>
<feature type="modified residue" description="Phosphoserine" evidence="1">
    <location>
        <position position="1775"/>
    </location>
</feature>
<feature type="modified residue" description="Phosphoserine" evidence="1">
    <location>
        <position position="1786"/>
    </location>
</feature>
<organism evidence="9">
    <name type="scientific">Mus musculus</name>
    <name type="common">Mouse</name>
    <dbReference type="NCBI Taxonomy" id="10090"/>
    <lineage>
        <taxon>Eukaryota</taxon>
        <taxon>Metazoa</taxon>
        <taxon>Chordata</taxon>
        <taxon>Craniata</taxon>
        <taxon>Vertebrata</taxon>
        <taxon>Euteleostomi</taxon>
        <taxon>Mammalia</taxon>
        <taxon>Eutheria</taxon>
        <taxon>Euarchontoglires</taxon>
        <taxon>Glires</taxon>
        <taxon>Rodentia</taxon>
        <taxon>Myomorpha</taxon>
        <taxon>Muroidea</taxon>
        <taxon>Muridae</taxon>
        <taxon>Murinae</taxon>
        <taxon>Mus</taxon>
        <taxon>Mus</taxon>
    </lineage>
</organism>